<sequence length="142" mass="15662">MENKDIRKILPHRYPFLLVDRIIEIEEGKKAVGIKNVTANEPFFQGHFPDNPIMPGVLIVEALAQVAGIAVMNIEEFKGKLGLFTGIDKCRFKKVVRPGDQLVLEVLIDSIKMGLVKAKGVAKVGDEVAATAELMFIMTEEG</sequence>
<dbReference type="EC" id="4.2.1.59" evidence="1"/>
<dbReference type="EMBL" id="CP000924">
    <property type="protein sequence ID" value="ABY95712.1"/>
    <property type="molecule type" value="Genomic_DNA"/>
</dbReference>
<dbReference type="RefSeq" id="WP_003867290.1">
    <property type="nucleotide sequence ID" value="NC_010321.1"/>
</dbReference>
<dbReference type="SMR" id="B0K7E6"/>
<dbReference type="STRING" id="340099.Teth39_2089"/>
<dbReference type="KEGG" id="tpd:Teth39_2089"/>
<dbReference type="eggNOG" id="COG0764">
    <property type="taxonomic scope" value="Bacteria"/>
</dbReference>
<dbReference type="HOGENOM" id="CLU_078912_3_0_9"/>
<dbReference type="Proteomes" id="UP000002156">
    <property type="component" value="Chromosome"/>
</dbReference>
<dbReference type="GO" id="GO:0005737">
    <property type="term" value="C:cytoplasm"/>
    <property type="evidence" value="ECO:0007669"/>
    <property type="project" value="UniProtKB-SubCell"/>
</dbReference>
<dbReference type="GO" id="GO:0016020">
    <property type="term" value="C:membrane"/>
    <property type="evidence" value="ECO:0007669"/>
    <property type="project" value="GOC"/>
</dbReference>
<dbReference type="GO" id="GO:0019171">
    <property type="term" value="F:(3R)-hydroxyacyl-[acyl-carrier-protein] dehydratase activity"/>
    <property type="evidence" value="ECO:0007669"/>
    <property type="project" value="UniProtKB-EC"/>
</dbReference>
<dbReference type="GO" id="GO:0006633">
    <property type="term" value="P:fatty acid biosynthetic process"/>
    <property type="evidence" value="ECO:0007669"/>
    <property type="project" value="UniProtKB-UniRule"/>
</dbReference>
<dbReference type="GO" id="GO:0009245">
    <property type="term" value="P:lipid A biosynthetic process"/>
    <property type="evidence" value="ECO:0007669"/>
    <property type="project" value="UniProtKB-UniRule"/>
</dbReference>
<dbReference type="CDD" id="cd01288">
    <property type="entry name" value="FabZ"/>
    <property type="match status" value="1"/>
</dbReference>
<dbReference type="FunFam" id="3.10.129.10:FF:000001">
    <property type="entry name" value="3-hydroxyacyl-[acyl-carrier-protein] dehydratase FabZ"/>
    <property type="match status" value="1"/>
</dbReference>
<dbReference type="Gene3D" id="3.10.129.10">
    <property type="entry name" value="Hotdog Thioesterase"/>
    <property type="match status" value="1"/>
</dbReference>
<dbReference type="HAMAP" id="MF_00406">
    <property type="entry name" value="FabZ"/>
    <property type="match status" value="1"/>
</dbReference>
<dbReference type="InterPro" id="IPR013114">
    <property type="entry name" value="FabA_FabZ"/>
</dbReference>
<dbReference type="InterPro" id="IPR010084">
    <property type="entry name" value="FabZ"/>
</dbReference>
<dbReference type="InterPro" id="IPR029069">
    <property type="entry name" value="HotDog_dom_sf"/>
</dbReference>
<dbReference type="NCBIfam" id="TIGR01750">
    <property type="entry name" value="fabZ"/>
    <property type="match status" value="1"/>
</dbReference>
<dbReference type="NCBIfam" id="NF000582">
    <property type="entry name" value="PRK00006.1"/>
    <property type="match status" value="1"/>
</dbReference>
<dbReference type="PANTHER" id="PTHR30272">
    <property type="entry name" value="3-HYDROXYACYL-[ACYL-CARRIER-PROTEIN] DEHYDRATASE"/>
    <property type="match status" value="1"/>
</dbReference>
<dbReference type="PANTHER" id="PTHR30272:SF1">
    <property type="entry name" value="3-HYDROXYACYL-[ACYL-CARRIER-PROTEIN] DEHYDRATASE"/>
    <property type="match status" value="1"/>
</dbReference>
<dbReference type="Pfam" id="PF07977">
    <property type="entry name" value="FabA"/>
    <property type="match status" value="1"/>
</dbReference>
<dbReference type="SUPFAM" id="SSF54637">
    <property type="entry name" value="Thioesterase/thiol ester dehydrase-isomerase"/>
    <property type="match status" value="1"/>
</dbReference>
<reference key="1">
    <citation type="submission" date="2008-01" db="EMBL/GenBank/DDBJ databases">
        <title>Complete sequence of Thermoanaerobacter pseudethanolicus 39E.</title>
        <authorList>
            <person name="Copeland A."/>
            <person name="Lucas S."/>
            <person name="Lapidus A."/>
            <person name="Barry K."/>
            <person name="Glavina del Rio T."/>
            <person name="Dalin E."/>
            <person name="Tice H."/>
            <person name="Pitluck S."/>
            <person name="Bruce D."/>
            <person name="Goodwin L."/>
            <person name="Saunders E."/>
            <person name="Brettin T."/>
            <person name="Detter J.C."/>
            <person name="Han C."/>
            <person name="Schmutz J."/>
            <person name="Larimer F."/>
            <person name="Land M."/>
            <person name="Hauser L."/>
            <person name="Kyrpides N."/>
            <person name="Lykidis A."/>
            <person name="Hemme C."/>
            <person name="Fields M.W."/>
            <person name="He Z."/>
            <person name="Zhou J."/>
            <person name="Richardson P."/>
        </authorList>
    </citation>
    <scope>NUCLEOTIDE SEQUENCE [LARGE SCALE GENOMIC DNA]</scope>
    <source>
        <strain>ATCC 33223 / DSM 2355 / 39E</strain>
    </source>
</reference>
<feature type="chain" id="PRO_1000123672" description="3-hydroxyacyl-[acyl-carrier-protein] dehydratase FabZ">
    <location>
        <begin position="1"/>
        <end position="142"/>
    </location>
</feature>
<feature type="active site" evidence="1">
    <location>
        <position position="47"/>
    </location>
</feature>
<accession>B0K7E6</accession>
<keyword id="KW-0963">Cytoplasm</keyword>
<keyword id="KW-0441">Lipid A biosynthesis</keyword>
<keyword id="KW-0444">Lipid biosynthesis</keyword>
<keyword id="KW-0443">Lipid metabolism</keyword>
<keyword id="KW-0456">Lyase</keyword>
<keyword id="KW-1185">Reference proteome</keyword>
<name>FABZ_THEP3</name>
<gene>
    <name evidence="1" type="primary">fabZ</name>
    <name type="ordered locus">Teth39_2089</name>
</gene>
<evidence type="ECO:0000255" key="1">
    <source>
        <dbReference type="HAMAP-Rule" id="MF_00406"/>
    </source>
</evidence>
<comment type="function">
    <text evidence="1">Involved in unsaturated fatty acids biosynthesis. Catalyzes the dehydration of short chain beta-hydroxyacyl-ACPs and long chain saturated and unsaturated beta-hydroxyacyl-ACPs.</text>
</comment>
<comment type="catalytic activity">
    <reaction evidence="1">
        <text>a (3R)-hydroxyacyl-[ACP] = a (2E)-enoyl-[ACP] + H2O</text>
        <dbReference type="Rhea" id="RHEA:13097"/>
        <dbReference type="Rhea" id="RHEA-COMP:9925"/>
        <dbReference type="Rhea" id="RHEA-COMP:9945"/>
        <dbReference type="ChEBI" id="CHEBI:15377"/>
        <dbReference type="ChEBI" id="CHEBI:78784"/>
        <dbReference type="ChEBI" id="CHEBI:78827"/>
        <dbReference type="EC" id="4.2.1.59"/>
    </reaction>
</comment>
<comment type="subcellular location">
    <subcellularLocation>
        <location evidence="1">Cytoplasm</location>
    </subcellularLocation>
</comment>
<comment type="similarity">
    <text evidence="1">Belongs to the thioester dehydratase family. FabZ subfamily.</text>
</comment>
<organism>
    <name type="scientific">Thermoanaerobacter pseudethanolicus (strain ATCC 33223 / 39E)</name>
    <name type="common">Clostridium thermohydrosulfuricum</name>
    <dbReference type="NCBI Taxonomy" id="340099"/>
    <lineage>
        <taxon>Bacteria</taxon>
        <taxon>Bacillati</taxon>
        <taxon>Bacillota</taxon>
        <taxon>Clostridia</taxon>
        <taxon>Thermoanaerobacterales</taxon>
        <taxon>Thermoanaerobacteraceae</taxon>
        <taxon>Thermoanaerobacter</taxon>
    </lineage>
</organism>
<protein>
    <recommendedName>
        <fullName evidence="1">3-hydroxyacyl-[acyl-carrier-protein] dehydratase FabZ</fullName>
        <ecNumber evidence="1">4.2.1.59</ecNumber>
    </recommendedName>
    <alternativeName>
        <fullName evidence="1">(3R)-hydroxymyristoyl-[acyl-carrier-protein] dehydratase</fullName>
        <shortName evidence="1">(3R)-hydroxymyristoyl-ACP dehydrase</shortName>
    </alternativeName>
    <alternativeName>
        <fullName evidence="1">Beta-hydroxyacyl-ACP dehydratase</fullName>
    </alternativeName>
</protein>
<proteinExistence type="inferred from homology"/>